<organism>
    <name type="scientific">Streptomyces coelicolor (strain ATCC BAA-471 / A3(2) / M145)</name>
    <dbReference type="NCBI Taxonomy" id="100226"/>
    <lineage>
        <taxon>Bacteria</taxon>
        <taxon>Bacillati</taxon>
        <taxon>Actinomycetota</taxon>
        <taxon>Actinomycetes</taxon>
        <taxon>Kitasatosporales</taxon>
        <taxon>Streptomycetaceae</taxon>
        <taxon>Streptomyces</taxon>
        <taxon>Streptomyces albidoflavus group</taxon>
    </lineage>
</organism>
<comment type="function">
    <text evidence="1">The glycine cleavage system catalyzes the degradation of glycine.</text>
</comment>
<comment type="catalytic activity">
    <reaction evidence="1">
        <text>N(6)-[(R)-S(8)-aminomethyldihydrolipoyl]-L-lysyl-[protein] + (6S)-5,6,7,8-tetrahydrofolate = N(6)-[(R)-dihydrolipoyl]-L-lysyl-[protein] + (6R)-5,10-methylene-5,6,7,8-tetrahydrofolate + NH4(+)</text>
        <dbReference type="Rhea" id="RHEA:16945"/>
        <dbReference type="Rhea" id="RHEA-COMP:10475"/>
        <dbReference type="Rhea" id="RHEA-COMP:10492"/>
        <dbReference type="ChEBI" id="CHEBI:15636"/>
        <dbReference type="ChEBI" id="CHEBI:28938"/>
        <dbReference type="ChEBI" id="CHEBI:57453"/>
        <dbReference type="ChEBI" id="CHEBI:83100"/>
        <dbReference type="ChEBI" id="CHEBI:83143"/>
        <dbReference type="EC" id="2.1.2.10"/>
    </reaction>
</comment>
<comment type="subunit">
    <text evidence="1">The glycine cleavage system is composed of four proteins: P, T, L and H.</text>
</comment>
<comment type="similarity">
    <text evidence="1">Belongs to the GcvT family.</text>
</comment>
<evidence type="ECO:0000255" key="1">
    <source>
        <dbReference type="HAMAP-Rule" id="MF_00259"/>
    </source>
</evidence>
<keyword id="KW-0032">Aminotransferase</keyword>
<keyword id="KW-1185">Reference proteome</keyword>
<keyword id="KW-0808">Transferase</keyword>
<reference key="1">
    <citation type="journal article" date="2002" name="Nature">
        <title>Complete genome sequence of the model actinomycete Streptomyces coelicolor A3(2).</title>
        <authorList>
            <person name="Bentley S.D."/>
            <person name="Chater K.F."/>
            <person name="Cerdeno-Tarraga A.-M."/>
            <person name="Challis G.L."/>
            <person name="Thomson N.R."/>
            <person name="James K.D."/>
            <person name="Harris D.E."/>
            <person name="Quail M.A."/>
            <person name="Kieser H."/>
            <person name="Harper D."/>
            <person name="Bateman A."/>
            <person name="Brown S."/>
            <person name="Chandra G."/>
            <person name="Chen C.W."/>
            <person name="Collins M."/>
            <person name="Cronin A."/>
            <person name="Fraser A."/>
            <person name="Goble A."/>
            <person name="Hidalgo J."/>
            <person name="Hornsby T."/>
            <person name="Howarth S."/>
            <person name="Huang C.-H."/>
            <person name="Kieser T."/>
            <person name="Larke L."/>
            <person name="Murphy L.D."/>
            <person name="Oliver K."/>
            <person name="O'Neil S."/>
            <person name="Rabbinowitsch E."/>
            <person name="Rajandream M.A."/>
            <person name="Rutherford K.M."/>
            <person name="Rutter S."/>
            <person name="Seeger K."/>
            <person name="Saunders D."/>
            <person name="Sharp S."/>
            <person name="Squares R."/>
            <person name="Squares S."/>
            <person name="Taylor K."/>
            <person name="Warren T."/>
            <person name="Wietzorrek A."/>
            <person name="Woodward J.R."/>
            <person name="Barrell B.G."/>
            <person name="Parkhill J."/>
            <person name="Hopwood D.A."/>
        </authorList>
    </citation>
    <scope>NUCLEOTIDE SEQUENCE [LARGE SCALE GENOMIC DNA]</scope>
    <source>
        <strain>ATCC BAA-471 / A3(2) / M145</strain>
    </source>
</reference>
<sequence>MSSTELRRTALDATHRALGATMTDFAGWDMPLRYGSEREEHVAVRTRAGLFDLSHMGEITVTGPQAAELLNFALVGNIGTVKPGRARYTMICREDGGILDDLIVYRLEEAEYMVVANASNAQVVLDALTERAAGFDAEVRDDRDAYALLAVQGPESPGILASLTDADLDGLKYYAGLPGTVAGVPALIARTGYTGEDGFELFVKPEHAVGLWQALTGAGEAAGLIPCGLSCRDTLRLEAGMPLYGNELSTALTPFDAGLGRVVKFEKEGDFVGRAALTEAAERAASRPPRVLVGLVAEGRRVPRSGYRVVAGGEVIGEVTSGAPSPTLGRPIAMAYVDPAHAAPGTEGVGVDIRGSHEPYEVVALPFYKRQK</sequence>
<dbReference type="EC" id="2.1.2.10" evidence="1"/>
<dbReference type="EMBL" id="AL939123">
    <property type="protein sequence ID" value="CAA20175.1"/>
    <property type="molecule type" value="Genomic_DNA"/>
</dbReference>
<dbReference type="PIR" id="T34752">
    <property type="entry name" value="T34752"/>
</dbReference>
<dbReference type="RefSeq" id="NP_629608.1">
    <property type="nucleotide sequence ID" value="NC_003888.3"/>
</dbReference>
<dbReference type="RefSeq" id="WP_003973526.1">
    <property type="nucleotide sequence ID" value="NZ_VNID01000011.1"/>
</dbReference>
<dbReference type="SMR" id="O86567"/>
<dbReference type="FunCoup" id="O86567">
    <property type="interactions" value="399"/>
</dbReference>
<dbReference type="STRING" id="100226.gene:17763124"/>
<dbReference type="PaxDb" id="100226-SCO5472"/>
<dbReference type="GeneID" id="91383561"/>
<dbReference type="KEGG" id="sco:SCO5472"/>
<dbReference type="PATRIC" id="fig|100226.15.peg.5556"/>
<dbReference type="eggNOG" id="COG0404">
    <property type="taxonomic scope" value="Bacteria"/>
</dbReference>
<dbReference type="HOGENOM" id="CLU_007884_10_2_11"/>
<dbReference type="InParanoid" id="O86567"/>
<dbReference type="OrthoDB" id="9774591at2"/>
<dbReference type="PhylomeDB" id="O86567"/>
<dbReference type="Proteomes" id="UP000001973">
    <property type="component" value="Chromosome"/>
</dbReference>
<dbReference type="GO" id="GO:0005829">
    <property type="term" value="C:cytosol"/>
    <property type="evidence" value="ECO:0000318"/>
    <property type="project" value="GO_Central"/>
</dbReference>
<dbReference type="GO" id="GO:0005960">
    <property type="term" value="C:glycine cleavage complex"/>
    <property type="evidence" value="ECO:0007669"/>
    <property type="project" value="InterPro"/>
</dbReference>
<dbReference type="GO" id="GO:0004047">
    <property type="term" value="F:aminomethyltransferase activity"/>
    <property type="evidence" value="ECO:0007669"/>
    <property type="project" value="UniProtKB-UniRule"/>
</dbReference>
<dbReference type="GO" id="GO:0008483">
    <property type="term" value="F:transaminase activity"/>
    <property type="evidence" value="ECO:0007669"/>
    <property type="project" value="UniProtKB-KW"/>
</dbReference>
<dbReference type="GO" id="GO:0019464">
    <property type="term" value="P:glycine decarboxylation via glycine cleavage system"/>
    <property type="evidence" value="ECO:0007669"/>
    <property type="project" value="UniProtKB-UniRule"/>
</dbReference>
<dbReference type="FunFam" id="2.40.30.110:FF:000003">
    <property type="entry name" value="Aminomethyltransferase"/>
    <property type="match status" value="1"/>
</dbReference>
<dbReference type="FunFam" id="3.30.70.1400:FF:000001">
    <property type="entry name" value="Aminomethyltransferase"/>
    <property type="match status" value="1"/>
</dbReference>
<dbReference type="FunFam" id="4.10.1250.10:FF:000001">
    <property type="entry name" value="Aminomethyltransferase"/>
    <property type="match status" value="1"/>
</dbReference>
<dbReference type="Gene3D" id="2.40.30.110">
    <property type="entry name" value="Aminomethyltransferase beta-barrel domains"/>
    <property type="match status" value="1"/>
</dbReference>
<dbReference type="Gene3D" id="3.30.70.1400">
    <property type="entry name" value="Aminomethyltransferase beta-barrel domains"/>
    <property type="match status" value="1"/>
</dbReference>
<dbReference type="Gene3D" id="4.10.1250.10">
    <property type="entry name" value="Aminomethyltransferase fragment"/>
    <property type="match status" value="1"/>
</dbReference>
<dbReference type="Gene3D" id="3.30.1360.120">
    <property type="entry name" value="Probable tRNA modification gtpase trme, domain 1"/>
    <property type="match status" value="1"/>
</dbReference>
<dbReference type="HAMAP" id="MF_00259">
    <property type="entry name" value="GcvT"/>
    <property type="match status" value="1"/>
</dbReference>
<dbReference type="InterPro" id="IPR006223">
    <property type="entry name" value="GCS_T"/>
</dbReference>
<dbReference type="InterPro" id="IPR022903">
    <property type="entry name" value="GCS_T_bac"/>
</dbReference>
<dbReference type="InterPro" id="IPR013977">
    <property type="entry name" value="GCST_C"/>
</dbReference>
<dbReference type="InterPro" id="IPR006222">
    <property type="entry name" value="GCV_T_N"/>
</dbReference>
<dbReference type="InterPro" id="IPR028896">
    <property type="entry name" value="GcvT/YgfZ/DmdA"/>
</dbReference>
<dbReference type="InterPro" id="IPR029043">
    <property type="entry name" value="GcvT/YgfZ_C"/>
</dbReference>
<dbReference type="InterPro" id="IPR027266">
    <property type="entry name" value="TrmE/GcvT_dom1"/>
</dbReference>
<dbReference type="NCBIfam" id="TIGR00528">
    <property type="entry name" value="gcvT"/>
    <property type="match status" value="1"/>
</dbReference>
<dbReference type="NCBIfam" id="NF001567">
    <property type="entry name" value="PRK00389.1"/>
    <property type="match status" value="1"/>
</dbReference>
<dbReference type="PANTHER" id="PTHR43757">
    <property type="entry name" value="AMINOMETHYLTRANSFERASE"/>
    <property type="match status" value="1"/>
</dbReference>
<dbReference type="PANTHER" id="PTHR43757:SF2">
    <property type="entry name" value="AMINOMETHYLTRANSFERASE, MITOCHONDRIAL"/>
    <property type="match status" value="1"/>
</dbReference>
<dbReference type="Pfam" id="PF01571">
    <property type="entry name" value="GCV_T"/>
    <property type="match status" value="1"/>
</dbReference>
<dbReference type="Pfam" id="PF08669">
    <property type="entry name" value="GCV_T_C"/>
    <property type="match status" value="1"/>
</dbReference>
<dbReference type="PIRSF" id="PIRSF006487">
    <property type="entry name" value="GcvT"/>
    <property type="match status" value="1"/>
</dbReference>
<dbReference type="SUPFAM" id="SSF101790">
    <property type="entry name" value="Aminomethyltransferase beta-barrel domain"/>
    <property type="match status" value="1"/>
</dbReference>
<dbReference type="SUPFAM" id="SSF103025">
    <property type="entry name" value="Folate-binding domain"/>
    <property type="match status" value="1"/>
</dbReference>
<gene>
    <name evidence="1" type="primary">gcvT</name>
    <name type="ordered locus">SCO5472</name>
    <name type="ORF">SC2A11.06c</name>
</gene>
<feature type="chain" id="PRO_0000122604" description="Aminomethyltransferase">
    <location>
        <begin position="1"/>
        <end position="372"/>
    </location>
</feature>
<proteinExistence type="inferred from homology"/>
<protein>
    <recommendedName>
        <fullName evidence="1">Aminomethyltransferase</fullName>
        <ecNumber evidence="1">2.1.2.10</ecNumber>
    </recommendedName>
    <alternativeName>
        <fullName evidence="1">Glycine cleavage system T protein</fullName>
    </alternativeName>
</protein>
<name>GCST_STRCO</name>
<accession>O86567</accession>